<gene>
    <name evidence="1" type="primary">hfq</name>
    <name type="ordered locus">Rsph17029_1451</name>
</gene>
<comment type="function">
    <text evidence="1">RNA chaperone that binds small regulatory RNA (sRNAs) and mRNAs to facilitate mRNA translational regulation in response to envelope stress, environmental stress and changes in metabolite concentrations. Also binds with high specificity to tRNAs.</text>
</comment>
<comment type="subunit">
    <text evidence="1">Homohexamer.</text>
</comment>
<comment type="similarity">
    <text evidence="1">Belongs to the Hfq family.</text>
</comment>
<keyword id="KW-0694">RNA-binding</keyword>
<keyword id="KW-0346">Stress response</keyword>
<feature type="chain" id="PRO_1000080683" description="RNA-binding protein Hfq">
    <location>
        <begin position="1"/>
        <end position="77"/>
    </location>
</feature>
<feature type="domain" description="Sm" evidence="2">
    <location>
        <begin position="10"/>
        <end position="70"/>
    </location>
</feature>
<organism>
    <name type="scientific">Cereibacter sphaeroides (strain ATCC 17029 / ATH 2.4.9)</name>
    <name type="common">Rhodobacter sphaeroides</name>
    <dbReference type="NCBI Taxonomy" id="349101"/>
    <lineage>
        <taxon>Bacteria</taxon>
        <taxon>Pseudomonadati</taxon>
        <taxon>Pseudomonadota</taxon>
        <taxon>Alphaproteobacteria</taxon>
        <taxon>Rhodobacterales</taxon>
        <taxon>Paracoccaceae</taxon>
        <taxon>Cereibacter</taxon>
    </lineage>
</organism>
<dbReference type="EMBL" id="CP000577">
    <property type="protein sequence ID" value="ABN76561.1"/>
    <property type="molecule type" value="Genomic_DNA"/>
</dbReference>
<dbReference type="RefSeq" id="WP_002719962.1">
    <property type="nucleotide sequence ID" value="NC_009049.1"/>
</dbReference>
<dbReference type="SMR" id="A3PJP5"/>
<dbReference type="GeneID" id="67446545"/>
<dbReference type="KEGG" id="rsh:Rsph17029_1451"/>
<dbReference type="HOGENOM" id="CLU_113688_0_0_5"/>
<dbReference type="GO" id="GO:0005829">
    <property type="term" value="C:cytosol"/>
    <property type="evidence" value="ECO:0007669"/>
    <property type="project" value="TreeGrafter"/>
</dbReference>
<dbReference type="GO" id="GO:0003723">
    <property type="term" value="F:RNA binding"/>
    <property type="evidence" value="ECO:0007669"/>
    <property type="project" value="UniProtKB-UniRule"/>
</dbReference>
<dbReference type="GO" id="GO:0006355">
    <property type="term" value="P:regulation of DNA-templated transcription"/>
    <property type="evidence" value="ECO:0007669"/>
    <property type="project" value="InterPro"/>
</dbReference>
<dbReference type="GO" id="GO:0043487">
    <property type="term" value="P:regulation of RNA stability"/>
    <property type="evidence" value="ECO:0007669"/>
    <property type="project" value="TreeGrafter"/>
</dbReference>
<dbReference type="GO" id="GO:0045974">
    <property type="term" value="P:regulation of translation, ncRNA-mediated"/>
    <property type="evidence" value="ECO:0007669"/>
    <property type="project" value="TreeGrafter"/>
</dbReference>
<dbReference type="CDD" id="cd01716">
    <property type="entry name" value="Hfq"/>
    <property type="match status" value="1"/>
</dbReference>
<dbReference type="FunFam" id="2.30.30.100:FF:000001">
    <property type="entry name" value="RNA-binding protein Hfq"/>
    <property type="match status" value="1"/>
</dbReference>
<dbReference type="Gene3D" id="2.30.30.100">
    <property type="match status" value="1"/>
</dbReference>
<dbReference type="HAMAP" id="MF_00436">
    <property type="entry name" value="Hfq"/>
    <property type="match status" value="1"/>
</dbReference>
<dbReference type="InterPro" id="IPR005001">
    <property type="entry name" value="Hfq"/>
</dbReference>
<dbReference type="InterPro" id="IPR010920">
    <property type="entry name" value="LSM_dom_sf"/>
</dbReference>
<dbReference type="InterPro" id="IPR047575">
    <property type="entry name" value="Sm"/>
</dbReference>
<dbReference type="NCBIfam" id="TIGR02383">
    <property type="entry name" value="Hfq"/>
    <property type="match status" value="1"/>
</dbReference>
<dbReference type="NCBIfam" id="NF001602">
    <property type="entry name" value="PRK00395.1"/>
    <property type="match status" value="1"/>
</dbReference>
<dbReference type="PANTHER" id="PTHR34772">
    <property type="entry name" value="RNA-BINDING PROTEIN HFQ"/>
    <property type="match status" value="1"/>
</dbReference>
<dbReference type="PANTHER" id="PTHR34772:SF1">
    <property type="entry name" value="RNA-BINDING PROTEIN HFQ"/>
    <property type="match status" value="1"/>
</dbReference>
<dbReference type="Pfam" id="PF17209">
    <property type="entry name" value="Hfq"/>
    <property type="match status" value="1"/>
</dbReference>
<dbReference type="SUPFAM" id="SSF50182">
    <property type="entry name" value="Sm-like ribonucleoproteins"/>
    <property type="match status" value="1"/>
</dbReference>
<dbReference type="PROSITE" id="PS52002">
    <property type="entry name" value="SM"/>
    <property type="match status" value="1"/>
</dbReference>
<accession>A3PJP5</accession>
<proteinExistence type="inferred from homology"/>
<name>HFQ_CERS1</name>
<protein>
    <recommendedName>
        <fullName evidence="1">RNA-binding protein Hfq</fullName>
    </recommendedName>
</protein>
<evidence type="ECO:0000255" key="1">
    <source>
        <dbReference type="HAMAP-Rule" id="MF_00436"/>
    </source>
</evidence>
<evidence type="ECO:0000255" key="2">
    <source>
        <dbReference type="PROSITE-ProRule" id="PRU01346"/>
    </source>
</evidence>
<reference key="1">
    <citation type="submission" date="2007-02" db="EMBL/GenBank/DDBJ databases">
        <title>Complete sequence of chromosome 1 of Rhodobacter sphaeroides ATCC 17029.</title>
        <authorList>
            <person name="Copeland A."/>
            <person name="Lucas S."/>
            <person name="Lapidus A."/>
            <person name="Barry K."/>
            <person name="Detter J.C."/>
            <person name="Glavina del Rio T."/>
            <person name="Hammon N."/>
            <person name="Israni S."/>
            <person name="Dalin E."/>
            <person name="Tice H."/>
            <person name="Pitluck S."/>
            <person name="Kiss H."/>
            <person name="Brettin T."/>
            <person name="Bruce D."/>
            <person name="Han C."/>
            <person name="Tapia R."/>
            <person name="Gilna P."/>
            <person name="Schmutz J."/>
            <person name="Larimer F."/>
            <person name="Land M."/>
            <person name="Hauser L."/>
            <person name="Kyrpides N."/>
            <person name="Mikhailova N."/>
            <person name="Richardson P."/>
            <person name="Mackenzie C."/>
            <person name="Choudhary M."/>
            <person name="Donohue T.J."/>
            <person name="Kaplan S."/>
        </authorList>
    </citation>
    <scope>NUCLEOTIDE SEQUENCE [LARGE SCALE GENOMIC DNA]</scope>
    <source>
        <strain>ATCC 17029 / ATH 2.4.9</strain>
    </source>
</reference>
<sequence length="77" mass="8715">MAADKQNLQDAFLNHVRKAKVPVTIFLINGVKLQGVITWFDNFCVLLRRDGQSQLVYKHAISTIMPGQPINLYEGDD</sequence>